<keyword id="KW-0963">Cytoplasm</keyword>
<keyword id="KW-0968">Cytoplasmic vesicle</keyword>
<keyword id="KW-0408">Iron</keyword>
<keyword id="KW-0409">Iron storage</keyword>
<keyword id="KW-0458">Lysosome</keyword>
<keyword id="KW-0479">Metal-binding</keyword>
<keyword id="KW-1185">Reference proteome</keyword>
<proteinExistence type="evidence at transcript level"/>
<reference key="1">
    <citation type="journal article" date="1988" name="Nucleic Acids Res.">
        <title>Nucleotide sequence of cDNA encoding rabbit ferritin L chain.</title>
        <authorList>
            <person name="Daniels-Mcqueen S."/>
            <person name="Ray A."/>
            <person name="Walden W.E."/>
            <person name="Ray B.K."/>
            <person name="Brown P.H."/>
            <person name="Thach R.E."/>
        </authorList>
    </citation>
    <scope>NUCLEOTIDE SEQUENCE [MRNA]</scope>
    <source>
        <strain>New Zealand white</strain>
        <tissue>Liver</tissue>
    </source>
</reference>
<gene>
    <name type="primary">FTL</name>
</gene>
<dbReference type="EMBL" id="X07830">
    <property type="protein sequence ID" value="CAA30682.1"/>
    <property type="molecule type" value="mRNA"/>
</dbReference>
<dbReference type="PIR" id="S01239">
    <property type="entry name" value="S01239"/>
</dbReference>
<dbReference type="RefSeq" id="NP_001095158.1">
    <property type="nucleotide sequence ID" value="NM_001101688.1"/>
</dbReference>
<dbReference type="SMR" id="P09451"/>
<dbReference type="FunCoup" id="P09451">
    <property type="interactions" value="73"/>
</dbReference>
<dbReference type="STRING" id="9986.ENSOCUP00000016423"/>
<dbReference type="PaxDb" id="9986-ENSOCUP00000016423"/>
<dbReference type="GeneID" id="100009254"/>
<dbReference type="KEGG" id="ocu:100009254"/>
<dbReference type="CTD" id="2512"/>
<dbReference type="eggNOG" id="KOG2332">
    <property type="taxonomic scope" value="Eukaryota"/>
</dbReference>
<dbReference type="InParanoid" id="P09451"/>
<dbReference type="OrthoDB" id="186462at2759"/>
<dbReference type="Proteomes" id="UP000001811">
    <property type="component" value="Unplaced"/>
</dbReference>
<dbReference type="GO" id="GO:0044754">
    <property type="term" value="C:autolysosome"/>
    <property type="evidence" value="ECO:0007669"/>
    <property type="project" value="UniProtKB-SubCell"/>
</dbReference>
<dbReference type="GO" id="GO:0005776">
    <property type="term" value="C:autophagosome"/>
    <property type="evidence" value="ECO:0007669"/>
    <property type="project" value="UniProtKB-SubCell"/>
</dbReference>
<dbReference type="GO" id="GO:0031410">
    <property type="term" value="C:cytoplasmic vesicle"/>
    <property type="evidence" value="ECO:0007669"/>
    <property type="project" value="UniProtKB-KW"/>
</dbReference>
<dbReference type="GO" id="GO:0070288">
    <property type="term" value="C:ferritin complex"/>
    <property type="evidence" value="ECO:0000250"/>
    <property type="project" value="UniProtKB"/>
</dbReference>
<dbReference type="GO" id="GO:0008199">
    <property type="term" value="F:ferric iron binding"/>
    <property type="evidence" value="ECO:0007669"/>
    <property type="project" value="InterPro"/>
</dbReference>
<dbReference type="GO" id="GO:0008198">
    <property type="term" value="F:ferrous iron binding"/>
    <property type="evidence" value="ECO:0007669"/>
    <property type="project" value="TreeGrafter"/>
</dbReference>
<dbReference type="GO" id="GO:0005506">
    <property type="term" value="F:iron ion binding"/>
    <property type="evidence" value="ECO:0000250"/>
    <property type="project" value="UniProtKB"/>
</dbReference>
<dbReference type="GO" id="GO:0006879">
    <property type="term" value="P:intracellular iron ion homeostasis"/>
    <property type="evidence" value="ECO:0007669"/>
    <property type="project" value="UniProtKB-KW"/>
</dbReference>
<dbReference type="GO" id="GO:0006826">
    <property type="term" value="P:iron ion transport"/>
    <property type="evidence" value="ECO:0007669"/>
    <property type="project" value="InterPro"/>
</dbReference>
<dbReference type="CDD" id="cd00904">
    <property type="entry name" value="Ferritin"/>
    <property type="match status" value="1"/>
</dbReference>
<dbReference type="FunFam" id="1.20.1260.10:FF:000009">
    <property type="entry name" value="Ferritin light chain"/>
    <property type="match status" value="1"/>
</dbReference>
<dbReference type="Gene3D" id="1.20.1260.10">
    <property type="match status" value="1"/>
</dbReference>
<dbReference type="InterPro" id="IPR001519">
    <property type="entry name" value="Ferritin"/>
</dbReference>
<dbReference type="InterPro" id="IPR012347">
    <property type="entry name" value="Ferritin-like"/>
</dbReference>
<dbReference type="InterPro" id="IPR009040">
    <property type="entry name" value="Ferritin-like_diiron"/>
</dbReference>
<dbReference type="InterPro" id="IPR009078">
    <property type="entry name" value="Ferritin-like_SF"/>
</dbReference>
<dbReference type="InterPro" id="IPR014034">
    <property type="entry name" value="Ferritin_CS"/>
</dbReference>
<dbReference type="InterPro" id="IPR008331">
    <property type="entry name" value="Ferritin_DPS_dom"/>
</dbReference>
<dbReference type="PANTHER" id="PTHR11431">
    <property type="entry name" value="FERRITIN"/>
    <property type="match status" value="1"/>
</dbReference>
<dbReference type="PANTHER" id="PTHR11431:SF47">
    <property type="entry name" value="FERRITIN LIGHT CHAIN"/>
    <property type="match status" value="1"/>
</dbReference>
<dbReference type="Pfam" id="PF00210">
    <property type="entry name" value="Ferritin"/>
    <property type="match status" value="1"/>
</dbReference>
<dbReference type="SUPFAM" id="SSF47240">
    <property type="entry name" value="Ferritin-like"/>
    <property type="match status" value="1"/>
</dbReference>
<dbReference type="PROSITE" id="PS00540">
    <property type="entry name" value="FERRITIN_1"/>
    <property type="match status" value="1"/>
</dbReference>
<dbReference type="PROSITE" id="PS00204">
    <property type="entry name" value="FERRITIN_2"/>
    <property type="match status" value="1"/>
</dbReference>
<dbReference type="PROSITE" id="PS50905">
    <property type="entry name" value="FERRITIN_LIKE"/>
    <property type="match status" value="1"/>
</dbReference>
<name>FRIL_RABIT</name>
<protein>
    <recommendedName>
        <fullName>Ferritin light chain</fullName>
        <shortName>Ferritin L subunit</shortName>
    </recommendedName>
</protein>
<accession>P09451</accession>
<sequence>MTSQIRQNYSPEVEAAVNHLVNLHLRASYTYLSLGFYFDRDDVALEGVSHFFRELAEEKREAAERLLKMQNQRGGRALFQDVQKPSQDEWGKTLNAMEAALALEKNLNQALLDLHALGSAHTDPHLCDFLENHFLDEEVKLLKKMGDHLTNIRRLSGPQASLGEYLFERLTLKHD</sequence>
<feature type="chain" id="PRO_0000201065" description="Ferritin light chain">
    <location>
        <begin position="1"/>
        <end position="175"/>
    </location>
</feature>
<feature type="domain" description="Ferritin-like diiron" evidence="4">
    <location>
        <begin position="7"/>
        <end position="156"/>
    </location>
</feature>
<feature type="binding site" evidence="4">
    <location>
        <position position="54"/>
    </location>
    <ligand>
        <name>Fe cation</name>
        <dbReference type="ChEBI" id="CHEBI:24875"/>
    </ligand>
</feature>
<feature type="binding site" evidence="4">
    <location>
        <position position="57"/>
    </location>
    <ligand>
        <name>Fe cation</name>
        <dbReference type="ChEBI" id="CHEBI:24875"/>
    </ligand>
</feature>
<feature type="binding site" evidence="4">
    <location>
        <position position="58"/>
    </location>
    <ligand>
        <name>Fe cation</name>
        <dbReference type="ChEBI" id="CHEBI:24875"/>
    </ligand>
</feature>
<feature type="binding site" evidence="4">
    <location>
        <position position="61"/>
    </location>
    <ligand>
        <name>Fe cation</name>
        <dbReference type="ChEBI" id="CHEBI:24875"/>
    </ligand>
</feature>
<feature type="binding site" evidence="4">
    <location>
        <position position="64"/>
    </location>
    <ligand>
        <name>Fe cation</name>
        <dbReference type="ChEBI" id="CHEBI:24875"/>
    </ligand>
</feature>
<evidence type="ECO:0000250" key="1"/>
<evidence type="ECO:0000250" key="2">
    <source>
        <dbReference type="UniProtKB" id="P02792"/>
    </source>
</evidence>
<evidence type="ECO:0000250" key="3">
    <source>
        <dbReference type="UniProtKB" id="P29391"/>
    </source>
</evidence>
<evidence type="ECO:0000255" key="4">
    <source>
        <dbReference type="PROSITE-ProRule" id="PRU00085"/>
    </source>
</evidence>
<evidence type="ECO:0000305" key="5"/>
<comment type="function">
    <text evidence="1 2">Stores iron in a soluble, non-toxic, readily available form. Important for iron homeostasis. Iron is taken up in the ferrous form and deposited as ferric hydroxides after oxidation. Also plays a role in delivery of iron to cells. Mediates iron uptake in capsule cells of the developing kidney (By similarity). Delivery to lysosomes by the cargo receptor NCOA4 for autophagic degradation and release or iron (By similarity).</text>
</comment>
<comment type="subunit">
    <text evidence="2">Oligomer of 24 subunits. There are two types of subunits: L (light) chain and H (heavy) chain. The major chain can be light or heavy, depending on the species and tissue type. The functional molecule forms a roughly spherical shell with a diameter of 12 nm and contains a central cavity into which the insoluble mineral iron core is deposited. Interacts with NCOA4 (By similarity).</text>
</comment>
<comment type="subcellular location">
    <subcellularLocation>
        <location evidence="2">Cytoplasmic vesicle</location>
        <location evidence="2">Autophagosome</location>
    </subcellularLocation>
    <subcellularLocation>
        <location evidence="3">Cytoplasm</location>
    </subcellularLocation>
    <subcellularLocation>
        <location evidence="3">Autolysosome</location>
    </subcellularLocation>
</comment>
<comment type="similarity">
    <text evidence="5">Belongs to the ferritin family.</text>
</comment>
<organism>
    <name type="scientific">Oryctolagus cuniculus</name>
    <name type="common">Rabbit</name>
    <dbReference type="NCBI Taxonomy" id="9986"/>
    <lineage>
        <taxon>Eukaryota</taxon>
        <taxon>Metazoa</taxon>
        <taxon>Chordata</taxon>
        <taxon>Craniata</taxon>
        <taxon>Vertebrata</taxon>
        <taxon>Euteleostomi</taxon>
        <taxon>Mammalia</taxon>
        <taxon>Eutheria</taxon>
        <taxon>Euarchontoglires</taxon>
        <taxon>Glires</taxon>
        <taxon>Lagomorpha</taxon>
        <taxon>Leporidae</taxon>
        <taxon>Oryctolagus</taxon>
    </lineage>
</organism>